<evidence type="ECO:0000255" key="1">
    <source>
        <dbReference type="HAMAP-Rule" id="MF_00102"/>
    </source>
</evidence>
<evidence type="ECO:0000305" key="2"/>
<proteinExistence type="inferred from homology"/>
<accession>P59474</accession>
<comment type="function">
    <text evidence="1">Catalyzes the conversion of 4-hydroxy-tetrahydrodipicolinate (HTPA) to tetrahydrodipicolinate.</text>
</comment>
<comment type="catalytic activity">
    <reaction evidence="1">
        <text>(S)-2,3,4,5-tetrahydrodipicolinate + NAD(+) + H2O = (2S,4S)-4-hydroxy-2,3,4,5-tetrahydrodipicolinate + NADH + H(+)</text>
        <dbReference type="Rhea" id="RHEA:35323"/>
        <dbReference type="ChEBI" id="CHEBI:15377"/>
        <dbReference type="ChEBI" id="CHEBI:15378"/>
        <dbReference type="ChEBI" id="CHEBI:16845"/>
        <dbReference type="ChEBI" id="CHEBI:57540"/>
        <dbReference type="ChEBI" id="CHEBI:57945"/>
        <dbReference type="ChEBI" id="CHEBI:67139"/>
        <dbReference type="EC" id="1.17.1.8"/>
    </reaction>
</comment>
<comment type="catalytic activity">
    <reaction evidence="1">
        <text>(S)-2,3,4,5-tetrahydrodipicolinate + NADP(+) + H2O = (2S,4S)-4-hydroxy-2,3,4,5-tetrahydrodipicolinate + NADPH + H(+)</text>
        <dbReference type="Rhea" id="RHEA:35331"/>
        <dbReference type="ChEBI" id="CHEBI:15377"/>
        <dbReference type="ChEBI" id="CHEBI:15378"/>
        <dbReference type="ChEBI" id="CHEBI:16845"/>
        <dbReference type="ChEBI" id="CHEBI:57783"/>
        <dbReference type="ChEBI" id="CHEBI:58349"/>
        <dbReference type="ChEBI" id="CHEBI:67139"/>
        <dbReference type="EC" id="1.17.1.8"/>
    </reaction>
</comment>
<comment type="pathway">
    <text evidence="1">Amino-acid biosynthesis; L-lysine biosynthesis via DAP pathway; (S)-tetrahydrodipicolinate from L-aspartate: step 4/4.</text>
</comment>
<comment type="subunit">
    <text evidence="1">Homotetramer.</text>
</comment>
<comment type="subcellular location">
    <subcellularLocation>
        <location evidence="1">Cytoplasm</location>
    </subcellularLocation>
</comment>
<comment type="similarity">
    <text evidence="1">Belongs to the DapB family.</text>
</comment>
<comment type="caution">
    <text evidence="2">Was originally thought to be a dihydrodipicolinate reductase (DHDPR), catalyzing the conversion of dihydrodipicolinate to tetrahydrodipicolinate. However, it was shown in E.coli that the substrate of the enzymatic reaction is not dihydrodipicolinate (DHDP) but in fact (2S,4S)-4-hydroxy-2,3,4,5-tetrahydrodipicolinic acid (HTPA), the product released by the DapA-catalyzed reaction.</text>
</comment>
<name>DAPB_BUCBP</name>
<keyword id="KW-0028">Amino-acid biosynthesis</keyword>
<keyword id="KW-0963">Cytoplasm</keyword>
<keyword id="KW-0220">Diaminopimelate biosynthesis</keyword>
<keyword id="KW-0457">Lysine biosynthesis</keyword>
<keyword id="KW-0520">NAD</keyword>
<keyword id="KW-0521">NADP</keyword>
<keyword id="KW-0560">Oxidoreductase</keyword>
<keyword id="KW-1185">Reference proteome</keyword>
<organism>
    <name type="scientific">Buchnera aphidicola subsp. Baizongia pistaciae (strain Bp)</name>
    <dbReference type="NCBI Taxonomy" id="224915"/>
    <lineage>
        <taxon>Bacteria</taxon>
        <taxon>Pseudomonadati</taxon>
        <taxon>Pseudomonadota</taxon>
        <taxon>Gammaproteobacteria</taxon>
        <taxon>Enterobacterales</taxon>
        <taxon>Erwiniaceae</taxon>
        <taxon>Buchnera</taxon>
    </lineage>
</organism>
<gene>
    <name evidence="1" type="primary">dapB</name>
    <name type="ordered locus">bbp_136</name>
</gene>
<sequence>MKKTTLNIAISGALGKMGINLIHEIYHTKNVFLTAAIVKNNSPYVQKNVGKITKIGEINIPITNSLEENINKFDILIDFTNPKTTLKNLEICAVAKKNIIIGTTGFTQEEQKKIKLLSKKIGIVQSSNYSIGINLMISLLEKTTQIIGKNTDIEIIEAHHNKKIDAPSGTSLEIGKKICKTMNWDFSKQAIYERHSSMKSRANNEIGFSSIRAGNIVGEHKVLFANSGEHIEITHKAISRSIFSKGAIQAAIWLFSKNYKNGLFNMNHILNI</sequence>
<feature type="chain" id="PRO_0000141421" description="4-hydroxy-tetrahydrodipicolinate reductase">
    <location>
        <begin position="1"/>
        <end position="272"/>
    </location>
</feature>
<feature type="active site" description="Proton donor/acceptor" evidence="1">
    <location>
        <position position="159"/>
    </location>
</feature>
<feature type="active site" description="Proton donor" evidence="1">
    <location>
        <position position="163"/>
    </location>
</feature>
<feature type="binding site" evidence="1">
    <location>
        <begin position="12"/>
        <end position="17"/>
    </location>
    <ligand>
        <name>NAD(+)</name>
        <dbReference type="ChEBI" id="CHEBI:57540"/>
    </ligand>
</feature>
<feature type="binding site" evidence="1">
    <location>
        <position position="39"/>
    </location>
    <ligand>
        <name>NADP(+)</name>
        <dbReference type="ChEBI" id="CHEBI:58349"/>
    </ligand>
</feature>
<feature type="binding site" evidence="1">
    <location>
        <begin position="102"/>
        <end position="104"/>
    </location>
    <ligand>
        <name>NAD(+)</name>
        <dbReference type="ChEBI" id="CHEBI:57540"/>
    </ligand>
</feature>
<feature type="binding site" evidence="1">
    <location>
        <begin position="126"/>
        <end position="129"/>
    </location>
    <ligand>
        <name>NAD(+)</name>
        <dbReference type="ChEBI" id="CHEBI:57540"/>
    </ligand>
</feature>
<feature type="binding site" evidence="1">
    <location>
        <position position="160"/>
    </location>
    <ligand>
        <name>(S)-2,3,4,5-tetrahydrodipicolinate</name>
        <dbReference type="ChEBI" id="CHEBI:16845"/>
    </ligand>
</feature>
<feature type="binding site" evidence="1">
    <location>
        <begin position="169"/>
        <end position="170"/>
    </location>
    <ligand>
        <name>(S)-2,3,4,5-tetrahydrodipicolinate</name>
        <dbReference type="ChEBI" id="CHEBI:16845"/>
    </ligand>
</feature>
<protein>
    <recommendedName>
        <fullName evidence="1">4-hydroxy-tetrahydrodipicolinate reductase</fullName>
        <shortName evidence="1">HTPA reductase</shortName>
        <ecNumber evidence="1">1.17.1.8</ecNumber>
    </recommendedName>
</protein>
<dbReference type="EC" id="1.17.1.8" evidence="1"/>
<dbReference type="EMBL" id="AE016826">
    <property type="protein sequence ID" value="AAO26870.1"/>
    <property type="molecule type" value="Genomic_DNA"/>
</dbReference>
<dbReference type="RefSeq" id="WP_011091271.1">
    <property type="nucleotide sequence ID" value="NC_004545.1"/>
</dbReference>
<dbReference type="SMR" id="P59474"/>
<dbReference type="STRING" id="224915.bbp_136"/>
<dbReference type="KEGG" id="bab:bbp_136"/>
<dbReference type="eggNOG" id="COG0289">
    <property type="taxonomic scope" value="Bacteria"/>
</dbReference>
<dbReference type="HOGENOM" id="CLU_047479_2_1_6"/>
<dbReference type="OrthoDB" id="9790352at2"/>
<dbReference type="UniPathway" id="UPA00034">
    <property type="reaction ID" value="UER00018"/>
</dbReference>
<dbReference type="Proteomes" id="UP000000601">
    <property type="component" value="Chromosome"/>
</dbReference>
<dbReference type="GO" id="GO:0005829">
    <property type="term" value="C:cytosol"/>
    <property type="evidence" value="ECO:0007669"/>
    <property type="project" value="TreeGrafter"/>
</dbReference>
<dbReference type="GO" id="GO:0008839">
    <property type="term" value="F:4-hydroxy-tetrahydrodipicolinate reductase"/>
    <property type="evidence" value="ECO:0007669"/>
    <property type="project" value="UniProtKB-EC"/>
</dbReference>
<dbReference type="GO" id="GO:0051287">
    <property type="term" value="F:NAD binding"/>
    <property type="evidence" value="ECO:0007669"/>
    <property type="project" value="UniProtKB-UniRule"/>
</dbReference>
<dbReference type="GO" id="GO:0050661">
    <property type="term" value="F:NADP binding"/>
    <property type="evidence" value="ECO:0007669"/>
    <property type="project" value="UniProtKB-UniRule"/>
</dbReference>
<dbReference type="GO" id="GO:0016726">
    <property type="term" value="F:oxidoreductase activity, acting on CH or CH2 groups, NAD or NADP as acceptor"/>
    <property type="evidence" value="ECO:0007669"/>
    <property type="project" value="UniProtKB-UniRule"/>
</dbReference>
<dbReference type="GO" id="GO:0019877">
    <property type="term" value="P:diaminopimelate biosynthetic process"/>
    <property type="evidence" value="ECO:0007669"/>
    <property type="project" value="UniProtKB-UniRule"/>
</dbReference>
<dbReference type="GO" id="GO:0009089">
    <property type="term" value="P:lysine biosynthetic process via diaminopimelate"/>
    <property type="evidence" value="ECO:0007669"/>
    <property type="project" value="UniProtKB-UniRule"/>
</dbReference>
<dbReference type="CDD" id="cd02274">
    <property type="entry name" value="DHDPR_N"/>
    <property type="match status" value="1"/>
</dbReference>
<dbReference type="FunFam" id="3.30.360.10:FF:000004">
    <property type="entry name" value="4-hydroxy-tetrahydrodipicolinate reductase"/>
    <property type="match status" value="1"/>
</dbReference>
<dbReference type="Gene3D" id="3.30.360.10">
    <property type="entry name" value="Dihydrodipicolinate Reductase, domain 2"/>
    <property type="match status" value="1"/>
</dbReference>
<dbReference type="Gene3D" id="3.40.50.720">
    <property type="entry name" value="NAD(P)-binding Rossmann-like Domain"/>
    <property type="match status" value="1"/>
</dbReference>
<dbReference type="HAMAP" id="MF_00102">
    <property type="entry name" value="DapB"/>
    <property type="match status" value="1"/>
</dbReference>
<dbReference type="InterPro" id="IPR022663">
    <property type="entry name" value="DapB_C"/>
</dbReference>
<dbReference type="InterPro" id="IPR000846">
    <property type="entry name" value="DapB_N"/>
</dbReference>
<dbReference type="InterPro" id="IPR022664">
    <property type="entry name" value="DapB_N_CS"/>
</dbReference>
<dbReference type="InterPro" id="IPR023940">
    <property type="entry name" value="DHDPR_bac"/>
</dbReference>
<dbReference type="InterPro" id="IPR036291">
    <property type="entry name" value="NAD(P)-bd_dom_sf"/>
</dbReference>
<dbReference type="NCBIfam" id="TIGR00036">
    <property type="entry name" value="dapB"/>
    <property type="match status" value="1"/>
</dbReference>
<dbReference type="PANTHER" id="PTHR20836:SF0">
    <property type="entry name" value="4-HYDROXY-TETRAHYDRODIPICOLINATE REDUCTASE 1, CHLOROPLASTIC-RELATED"/>
    <property type="match status" value="1"/>
</dbReference>
<dbReference type="PANTHER" id="PTHR20836">
    <property type="entry name" value="DIHYDRODIPICOLINATE REDUCTASE"/>
    <property type="match status" value="1"/>
</dbReference>
<dbReference type="Pfam" id="PF05173">
    <property type="entry name" value="DapB_C"/>
    <property type="match status" value="1"/>
</dbReference>
<dbReference type="Pfam" id="PF01113">
    <property type="entry name" value="DapB_N"/>
    <property type="match status" value="1"/>
</dbReference>
<dbReference type="PIRSF" id="PIRSF000161">
    <property type="entry name" value="DHPR"/>
    <property type="match status" value="1"/>
</dbReference>
<dbReference type="SUPFAM" id="SSF55347">
    <property type="entry name" value="Glyceraldehyde-3-phosphate dehydrogenase-like, C-terminal domain"/>
    <property type="match status" value="1"/>
</dbReference>
<dbReference type="SUPFAM" id="SSF51735">
    <property type="entry name" value="NAD(P)-binding Rossmann-fold domains"/>
    <property type="match status" value="1"/>
</dbReference>
<dbReference type="PROSITE" id="PS01298">
    <property type="entry name" value="DAPB"/>
    <property type="match status" value="1"/>
</dbReference>
<reference key="1">
    <citation type="journal article" date="2003" name="Proc. Natl. Acad. Sci. U.S.A.">
        <title>Reductive genome evolution in Buchnera aphidicola.</title>
        <authorList>
            <person name="van Ham R.C.H.J."/>
            <person name="Kamerbeek J."/>
            <person name="Palacios C."/>
            <person name="Rausell C."/>
            <person name="Abascal F."/>
            <person name="Bastolla U."/>
            <person name="Fernandez J.M."/>
            <person name="Jimenez L."/>
            <person name="Postigo M."/>
            <person name="Silva F.J."/>
            <person name="Tamames J."/>
            <person name="Viguera E."/>
            <person name="Latorre A."/>
            <person name="Valencia A."/>
            <person name="Moran F."/>
            <person name="Moya A."/>
        </authorList>
    </citation>
    <scope>NUCLEOTIDE SEQUENCE [LARGE SCALE GENOMIC DNA]</scope>
    <source>
        <strain>Bp</strain>
    </source>
</reference>